<feature type="chain" id="PRO_0000157932" description="Cholesterol ring-cleaving hydrolase IpdB subunit">
    <location>
        <begin position="1"/>
        <end position="250"/>
    </location>
</feature>
<organism>
    <name type="scientific">Mycobacterium bovis (strain ATCC BAA-935 / AF2122/97)</name>
    <dbReference type="NCBI Taxonomy" id="233413"/>
    <lineage>
        <taxon>Bacteria</taxon>
        <taxon>Bacillati</taxon>
        <taxon>Actinomycetota</taxon>
        <taxon>Actinomycetes</taxon>
        <taxon>Mycobacteriales</taxon>
        <taxon>Mycobacteriaceae</taxon>
        <taxon>Mycobacterium</taxon>
        <taxon>Mycobacterium tuberculosis complex</taxon>
    </lineage>
</organism>
<accession>P63653</accession>
<accession>A0A1R3Y4K3</accession>
<accession>P71848</accession>
<accession>X2BNK8</accession>
<keyword id="KW-0153">Cholesterol metabolism</keyword>
<keyword id="KW-0443">Lipid metabolism</keyword>
<keyword id="KW-0456">Lyase</keyword>
<keyword id="KW-1185">Reference proteome</keyword>
<keyword id="KW-0753">Steroid metabolism</keyword>
<keyword id="KW-1207">Sterol metabolism</keyword>
<comment type="function">
    <text evidence="1">Involved in the final steps of cholesterol and steroid degradation. Opens the last steroid ring of cholesterol by catalyzing the hydrolysis of (3E)-2-(2-carboxylatoethyl)-3-methyl-6-oxocyclohex-1-ene-1-carboxyl-CoA (COCHEA-CoA) to 6-methyl-3,7-dioxodecanedioyl-CoA (MeDODA-CoA).</text>
</comment>
<comment type="catalytic activity">
    <reaction evidence="1">
        <text>(3E)-2-(2-carboxylatoethyl)-3-methyl-6-oxocyclohex-1-ene-1-carboxyl-CoA + H2O = 6-methyl-3,7-dioxodecanedioyl-CoA</text>
        <dbReference type="Rhea" id="RHEA:66364"/>
        <dbReference type="ChEBI" id="CHEBI:15377"/>
        <dbReference type="ChEBI" id="CHEBI:167101"/>
        <dbReference type="ChEBI" id="CHEBI:167102"/>
    </reaction>
    <physiologicalReaction direction="left-to-right" evidence="1">
        <dbReference type="Rhea" id="RHEA:66365"/>
    </physiologicalReaction>
</comment>
<comment type="pathway">
    <text evidence="1">Steroid metabolism; cholesterol degradation.</text>
</comment>
<comment type="subunit">
    <text evidence="1">Heterotetramer composed of 2 IpdA subunits and 2 IpdB subunits.</text>
</comment>
<comment type="similarity">
    <text evidence="2">Belongs to the 3-oxoacid CoA-transferase subunit B family.</text>
</comment>
<gene>
    <name evidence="1" type="primary">ipdB</name>
    <name type="ordered locus">BQ2027_MB3582</name>
</gene>
<sequence>MSTRAEVCAVACAELFRDAGEIMISPMTNMASVGARLARLTFAPDILLTDGEAQLLADTPALGKTGAPNRIEGWMPFGRVFETLAWGRRHVVMGANQVDRYGNQNISAFGPLQRPTRQMFGVRGSPGNTINHATSYWVGNHCKRVFVEAVDVVSGIGYDKVDPDNPAFRFVNVYRVVSNLGVFDFGGPDHSMRAVSLHPGVTPGDVRDATSFEVHDLDAAEQTRLPTDDELHLIRAVIDPKSLRDREIRS</sequence>
<evidence type="ECO:0000250" key="1">
    <source>
        <dbReference type="UniProtKB" id="P9WPV9"/>
    </source>
</evidence>
<evidence type="ECO:0000305" key="2"/>
<reference key="1">
    <citation type="journal article" date="2003" name="Proc. Natl. Acad. Sci. U.S.A.">
        <title>The complete genome sequence of Mycobacterium bovis.</title>
        <authorList>
            <person name="Garnier T."/>
            <person name="Eiglmeier K."/>
            <person name="Camus J.-C."/>
            <person name="Medina N."/>
            <person name="Mansoor H."/>
            <person name="Pryor M."/>
            <person name="Duthoy S."/>
            <person name="Grondin S."/>
            <person name="Lacroix C."/>
            <person name="Monsempe C."/>
            <person name="Simon S."/>
            <person name="Harris B."/>
            <person name="Atkin R."/>
            <person name="Doggett J."/>
            <person name="Mayes R."/>
            <person name="Keating L."/>
            <person name="Wheeler P.R."/>
            <person name="Parkhill J."/>
            <person name="Barrell B.G."/>
            <person name="Cole S.T."/>
            <person name="Gordon S.V."/>
            <person name="Hewinson R.G."/>
        </authorList>
    </citation>
    <scope>NUCLEOTIDE SEQUENCE [LARGE SCALE GENOMIC DNA]</scope>
    <source>
        <strain>ATCC BAA-935 / AF2122/97</strain>
    </source>
</reference>
<reference key="2">
    <citation type="journal article" date="2017" name="Genome Announc.">
        <title>Updated reference genome sequence and annotation of Mycobacterium bovis AF2122/97.</title>
        <authorList>
            <person name="Malone K.M."/>
            <person name="Farrell D."/>
            <person name="Stuber T.P."/>
            <person name="Schubert O.T."/>
            <person name="Aebersold R."/>
            <person name="Robbe-Austerman S."/>
            <person name="Gordon S.V."/>
        </authorList>
    </citation>
    <scope>NUCLEOTIDE SEQUENCE [LARGE SCALE GENOMIC DNA]</scope>
    <scope>GENOME REANNOTATION</scope>
    <source>
        <strain>ATCC BAA-935 / AF2122/97</strain>
    </source>
</reference>
<protein>
    <recommendedName>
        <fullName evidence="1">Cholesterol ring-cleaving hydrolase IpdB subunit</fullName>
        <ecNumber evidence="1">4.1.99.-</ecNumber>
    </recommendedName>
    <alternativeName>
        <fullName evidence="1">(3E)-2-(2-carboxylatoethyl)-3-methyl-6-oxocyclohex-1-ene-1-carboxyl-CoA hydrolase beta subunit</fullName>
        <shortName evidence="1">COCHEA-CoA hydrolase beta subunit</shortName>
    </alternativeName>
</protein>
<proteinExistence type="inferred from homology"/>
<dbReference type="EC" id="4.1.99.-" evidence="1"/>
<dbReference type="EMBL" id="LT708304">
    <property type="protein sequence ID" value="SIU02209.1"/>
    <property type="molecule type" value="Genomic_DNA"/>
</dbReference>
<dbReference type="RefSeq" id="NP_857221.1">
    <property type="nucleotide sequence ID" value="NC_002945.3"/>
</dbReference>
<dbReference type="RefSeq" id="WP_003419321.1">
    <property type="nucleotide sequence ID" value="NC_002945.4"/>
</dbReference>
<dbReference type="SMR" id="P63653"/>
<dbReference type="GeneID" id="45427536"/>
<dbReference type="KEGG" id="mbo:BQ2027_MB3582"/>
<dbReference type="PATRIC" id="fig|233413.5.peg.3925"/>
<dbReference type="UniPathway" id="UPA01058"/>
<dbReference type="Proteomes" id="UP000001419">
    <property type="component" value="Chromosome"/>
</dbReference>
<dbReference type="GO" id="GO:0008410">
    <property type="term" value="F:CoA-transferase activity"/>
    <property type="evidence" value="ECO:0007669"/>
    <property type="project" value="InterPro"/>
</dbReference>
<dbReference type="GO" id="GO:0016829">
    <property type="term" value="F:lyase activity"/>
    <property type="evidence" value="ECO:0007669"/>
    <property type="project" value="UniProtKB-KW"/>
</dbReference>
<dbReference type="GO" id="GO:0006707">
    <property type="term" value="P:cholesterol catabolic process"/>
    <property type="evidence" value="ECO:0007669"/>
    <property type="project" value="UniProtKB-UniPathway"/>
</dbReference>
<dbReference type="Gene3D" id="3.40.1080.10">
    <property type="entry name" value="Glutaconate Coenzyme A-transferase"/>
    <property type="match status" value="1"/>
</dbReference>
<dbReference type="InterPro" id="IPR004165">
    <property type="entry name" value="CoA_trans_fam_I"/>
</dbReference>
<dbReference type="InterPro" id="IPR037171">
    <property type="entry name" value="NagB/RpiA_transferase-like"/>
</dbReference>
<dbReference type="PANTHER" id="PTHR43293">
    <property type="entry name" value="ACETATE COA-TRANSFERASE YDIF"/>
    <property type="match status" value="1"/>
</dbReference>
<dbReference type="PANTHER" id="PTHR43293:SF3">
    <property type="entry name" value="CHOLESTEROL RING-CLEAVING HYDROLASE IPDB SUBUNIT"/>
    <property type="match status" value="1"/>
</dbReference>
<dbReference type="SMART" id="SM00882">
    <property type="entry name" value="CoA_trans"/>
    <property type="match status" value="1"/>
</dbReference>
<dbReference type="SUPFAM" id="SSF100950">
    <property type="entry name" value="NagB/RpiA/CoA transferase-like"/>
    <property type="match status" value="1"/>
</dbReference>
<name>IPDB_MYCBO</name>